<evidence type="ECO:0000255" key="1"/>
<evidence type="ECO:0000305" key="2"/>
<protein>
    <recommendedName>
        <fullName>ATP synthase subunit beta, mitochondrial</fullName>
        <ecNumber>7.1.2.2</ecNumber>
    </recommendedName>
</protein>
<gene>
    <name type="primary">ATP2</name>
    <name type="ordered locus">KLLA0D10703g</name>
</gene>
<accession>P49376</accession>
<keyword id="KW-0066">ATP synthesis</keyword>
<keyword id="KW-0067">ATP-binding</keyword>
<keyword id="KW-0139">CF(1)</keyword>
<keyword id="KW-0375">Hydrogen ion transport</keyword>
<keyword id="KW-0406">Ion transport</keyword>
<keyword id="KW-0472">Membrane</keyword>
<keyword id="KW-0496">Mitochondrion</keyword>
<keyword id="KW-0999">Mitochondrion inner membrane</keyword>
<keyword id="KW-0547">Nucleotide-binding</keyword>
<keyword id="KW-1185">Reference proteome</keyword>
<keyword id="KW-0809">Transit peptide</keyword>
<keyword id="KW-1278">Translocase</keyword>
<keyword id="KW-0813">Transport</keyword>
<sequence length="505" mass="54069">MVLPRFYAASSRAALQAARRAVPFTGVRGYAAAASSQGKVRAVIGAIVDVQFEQGQLPAILNALEIDTPEGKLVLEVAQHLGENTVRTIAMDGTEGLVRGENVSDTGAPISVPVGRETLGRIINVIGEPIDERGPINSKMRKPIHADPPLFVEQSTAAEVLETGIKVVDLLAPYARGGKIGLFGGAGVGKTVFIQELINNIAKAHGGFSVFTGVGERTREGNDLYREMKETGVINLEGDSKVALVFGQMNEPPGARARVALTGLTIAEYFRDEEGQDVLLFIDNIFRFTQAGSEVSALLGRIPSAVGYQPTLATDMGLLQERITTTKKGSVTSVQAVYVPADDLTDPAPATTFAHLDATTVLSRGISELGIYPAVDPLDSKSRLLDAAVVGQEHYDVATQVQQTLQAYKSLQDIIAILGMDELSEQDKLTVERARKIQRFLSQPFAVAEVFTGIPGRLVRLKDTISSFKAVLDGKYDHLPENAFYMVGGIEDVVAKAEKLAAEAN</sequence>
<name>ATPB_KLULA</name>
<proteinExistence type="inferred from homology"/>
<comment type="function">
    <text>Mitochondrial membrane ATP synthase (F(1)F(0) ATP synthase or Complex V) produces ATP from ADP in the presence of a proton gradient across the membrane which is generated by electron transport complexes of the respiratory chain. F-type ATPases consist of two structural domains, F(1) - containing the extramembraneous catalytic core, and F(0) - containing the membrane proton channel, linked together by a central stalk and a peripheral stalk. During catalysis, ATP synthesis in the catalytic domain of F(1) is coupled via a rotary mechanism of the central stalk subunits to proton translocation. Subunits alpha and beta form the catalytic core in F(1). Rotation of the central stalk against the surrounding alpha(3)beta(3) subunits leads to hydrolysis of ATP in three separate catalytic sites on the beta subunits.</text>
</comment>
<comment type="catalytic activity">
    <reaction>
        <text>ATP + H2O + 4 H(+)(in) = ADP + phosphate + 5 H(+)(out)</text>
        <dbReference type="Rhea" id="RHEA:57720"/>
        <dbReference type="ChEBI" id="CHEBI:15377"/>
        <dbReference type="ChEBI" id="CHEBI:15378"/>
        <dbReference type="ChEBI" id="CHEBI:30616"/>
        <dbReference type="ChEBI" id="CHEBI:43474"/>
        <dbReference type="ChEBI" id="CHEBI:456216"/>
        <dbReference type="EC" id="7.1.2.2"/>
    </reaction>
</comment>
<comment type="subunit">
    <text>F-type ATPases have 2 components, CF(1) - the catalytic core - and CF(0) - the membrane proton channel. CF(1) has five subunits: alpha(3), beta(3), gamma(1), delta(1), epsilon(1). CF(0) has three main subunits: a, b and c.</text>
</comment>
<comment type="subcellular location">
    <subcellularLocation>
        <location>Mitochondrion</location>
    </subcellularLocation>
    <subcellularLocation>
        <location>Mitochondrion inner membrane</location>
    </subcellularLocation>
    <text>Peripheral membrane protein.</text>
</comment>
<comment type="similarity">
    <text evidence="2">Belongs to the ATPase alpha/beta chains family.</text>
</comment>
<organism>
    <name type="scientific">Kluyveromyces lactis (strain ATCC 8585 / CBS 2359 / DSM 70799 / NBRC 1267 / NRRL Y-1140 / WM37)</name>
    <name type="common">Yeast</name>
    <name type="synonym">Candida sphaerica</name>
    <dbReference type="NCBI Taxonomy" id="284590"/>
    <lineage>
        <taxon>Eukaryota</taxon>
        <taxon>Fungi</taxon>
        <taxon>Dikarya</taxon>
        <taxon>Ascomycota</taxon>
        <taxon>Saccharomycotina</taxon>
        <taxon>Saccharomycetes</taxon>
        <taxon>Saccharomycetales</taxon>
        <taxon>Saccharomycetaceae</taxon>
        <taxon>Kluyveromyces</taxon>
    </lineage>
</organism>
<reference key="1">
    <citation type="journal article" date="1996" name="Genetics">
        <title>The mitochondrial genome integrity gene, MGI1, of Kluyveromyces lactis encodes the beta-subunit of F1-ATPase.</title>
        <authorList>
            <person name="Chen X.J."/>
            <person name="Clark-Walker G.D."/>
        </authorList>
    </citation>
    <scope>NUCLEOTIDE SEQUENCE [GENOMIC DNA]</scope>
    <source>
        <strain>ATCC 76492 / CBS 2359/152 / CLIB 210</strain>
    </source>
</reference>
<reference key="2">
    <citation type="journal article" date="2004" name="Nature">
        <title>Genome evolution in yeasts.</title>
        <authorList>
            <person name="Dujon B."/>
            <person name="Sherman D."/>
            <person name="Fischer G."/>
            <person name="Durrens P."/>
            <person name="Casaregola S."/>
            <person name="Lafontaine I."/>
            <person name="de Montigny J."/>
            <person name="Marck C."/>
            <person name="Neuveglise C."/>
            <person name="Talla E."/>
            <person name="Goffard N."/>
            <person name="Frangeul L."/>
            <person name="Aigle M."/>
            <person name="Anthouard V."/>
            <person name="Babour A."/>
            <person name="Barbe V."/>
            <person name="Barnay S."/>
            <person name="Blanchin S."/>
            <person name="Beckerich J.-M."/>
            <person name="Beyne E."/>
            <person name="Bleykasten C."/>
            <person name="Boisrame A."/>
            <person name="Boyer J."/>
            <person name="Cattolico L."/>
            <person name="Confanioleri F."/>
            <person name="de Daruvar A."/>
            <person name="Despons L."/>
            <person name="Fabre E."/>
            <person name="Fairhead C."/>
            <person name="Ferry-Dumazet H."/>
            <person name="Groppi A."/>
            <person name="Hantraye F."/>
            <person name="Hennequin C."/>
            <person name="Jauniaux N."/>
            <person name="Joyet P."/>
            <person name="Kachouri R."/>
            <person name="Kerrest A."/>
            <person name="Koszul R."/>
            <person name="Lemaire M."/>
            <person name="Lesur I."/>
            <person name="Ma L."/>
            <person name="Muller H."/>
            <person name="Nicaud J.-M."/>
            <person name="Nikolski M."/>
            <person name="Oztas S."/>
            <person name="Ozier-Kalogeropoulos O."/>
            <person name="Pellenz S."/>
            <person name="Potier S."/>
            <person name="Richard G.-F."/>
            <person name="Straub M.-L."/>
            <person name="Suleau A."/>
            <person name="Swennen D."/>
            <person name="Tekaia F."/>
            <person name="Wesolowski-Louvel M."/>
            <person name="Westhof E."/>
            <person name="Wirth B."/>
            <person name="Zeniou-Meyer M."/>
            <person name="Zivanovic Y."/>
            <person name="Bolotin-Fukuhara M."/>
            <person name="Thierry A."/>
            <person name="Bouchier C."/>
            <person name="Caudron B."/>
            <person name="Scarpelli C."/>
            <person name="Gaillardin C."/>
            <person name="Weissenbach J."/>
            <person name="Wincker P."/>
            <person name="Souciet J.-L."/>
        </authorList>
    </citation>
    <scope>NUCLEOTIDE SEQUENCE [LARGE SCALE GENOMIC DNA]</scope>
    <source>
        <strain>ATCC 8585 / CBS 2359 / DSM 70799 / NBRC 1267 / NRRL Y-1140 / WM37</strain>
    </source>
</reference>
<dbReference type="EC" id="7.1.2.2"/>
<dbReference type="EMBL" id="U37764">
    <property type="protein sequence ID" value="AAA96150.1"/>
    <property type="molecule type" value="Genomic_DNA"/>
</dbReference>
<dbReference type="EMBL" id="CR382124">
    <property type="protein sequence ID" value="CAH00634.1"/>
    <property type="molecule type" value="Genomic_DNA"/>
</dbReference>
<dbReference type="RefSeq" id="XP_453538.1">
    <property type="nucleotide sequence ID" value="XM_453538.1"/>
</dbReference>
<dbReference type="SMR" id="P49376"/>
<dbReference type="FunCoup" id="P49376">
    <property type="interactions" value="1325"/>
</dbReference>
<dbReference type="STRING" id="284590.P49376"/>
<dbReference type="PaxDb" id="284590-P49376"/>
<dbReference type="KEGG" id="kla:KLLA0_D10703g"/>
<dbReference type="eggNOG" id="KOG1350">
    <property type="taxonomic scope" value="Eukaryota"/>
</dbReference>
<dbReference type="HOGENOM" id="CLU_022398_0_2_1"/>
<dbReference type="InParanoid" id="P49376"/>
<dbReference type="OMA" id="SMEEGGW"/>
<dbReference type="Proteomes" id="UP000000598">
    <property type="component" value="Chromosome D"/>
</dbReference>
<dbReference type="GO" id="GO:0005743">
    <property type="term" value="C:mitochondrial inner membrane"/>
    <property type="evidence" value="ECO:0007669"/>
    <property type="project" value="UniProtKB-SubCell"/>
</dbReference>
<dbReference type="GO" id="GO:0045259">
    <property type="term" value="C:proton-transporting ATP synthase complex"/>
    <property type="evidence" value="ECO:0007669"/>
    <property type="project" value="UniProtKB-KW"/>
</dbReference>
<dbReference type="GO" id="GO:0005524">
    <property type="term" value="F:ATP binding"/>
    <property type="evidence" value="ECO:0007669"/>
    <property type="project" value="UniProtKB-KW"/>
</dbReference>
<dbReference type="GO" id="GO:0016887">
    <property type="term" value="F:ATP hydrolysis activity"/>
    <property type="evidence" value="ECO:0007669"/>
    <property type="project" value="InterPro"/>
</dbReference>
<dbReference type="GO" id="GO:0046933">
    <property type="term" value="F:proton-transporting ATP synthase activity, rotational mechanism"/>
    <property type="evidence" value="ECO:0007669"/>
    <property type="project" value="InterPro"/>
</dbReference>
<dbReference type="GO" id="GO:0042776">
    <property type="term" value="P:proton motive force-driven mitochondrial ATP synthesis"/>
    <property type="evidence" value="ECO:0007669"/>
    <property type="project" value="TreeGrafter"/>
</dbReference>
<dbReference type="CDD" id="cd18110">
    <property type="entry name" value="ATP-synt_F1_beta_C"/>
    <property type="match status" value="1"/>
</dbReference>
<dbReference type="CDD" id="cd18115">
    <property type="entry name" value="ATP-synt_F1_beta_N"/>
    <property type="match status" value="1"/>
</dbReference>
<dbReference type="CDD" id="cd01133">
    <property type="entry name" value="F1-ATPase_beta_CD"/>
    <property type="match status" value="1"/>
</dbReference>
<dbReference type="FunFam" id="1.10.1140.10:FF:000001">
    <property type="entry name" value="ATP synthase subunit beta"/>
    <property type="match status" value="1"/>
</dbReference>
<dbReference type="FunFam" id="2.40.10.170:FF:000004">
    <property type="entry name" value="ATP synthase subunit beta"/>
    <property type="match status" value="1"/>
</dbReference>
<dbReference type="FunFam" id="3.40.50.300:FF:000026">
    <property type="entry name" value="ATP synthase subunit beta"/>
    <property type="match status" value="1"/>
</dbReference>
<dbReference type="Gene3D" id="2.40.10.170">
    <property type="match status" value="1"/>
</dbReference>
<dbReference type="Gene3D" id="1.10.1140.10">
    <property type="entry name" value="Bovine Mitochondrial F1-atpase, Atp Synthase Beta Chain, Chain D, domain 3"/>
    <property type="match status" value="1"/>
</dbReference>
<dbReference type="Gene3D" id="3.40.50.300">
    <property type="entry name" value="P-loop containing nucleotide triphosphate hydrolases"/>
    <property type="match status" value="1"/>
</dbReference>
<dbReference type="HAMAP" id="MF_01347">
    <property type="entry name" value="ATP_synth_beta_bact"/>
    <property type="match status" value="1"/>
</dbReference>
<dbReference type="InterPro" id="IPR003593">
    <property type="entry name" value="AAA+_ATPase"/>
</dbReference>
<dbReference type="InterPro" id="IPR055190">
    <property type="entry name" value="ATP-synt_VA_C"/>
</dbReference>
<dbReference type="InterPro" id="IPR005722">
    <property type="entry name" value="ATP_synth_F1_bsu"/>
</dbReference>
<dbReference type="InterPro" id="IPR020003">
    <property type="entry name" value="ATPase_a/bsu_AS"/>
</dbReference>
<dbReference type="InterPro" id="IPR050053">
    <property type="entry name" value="ATPase_alpha/beta_chains"/>
</dbReference>
<dbReference type="InterPro" id="IPR004100">
    <property type="entry name" value="ATPase_F1/V1/A1_a/bsu_N"/>
</dbReference>
<dbReference type="InterPro" id="IPR036121">
    <property type="entry name" value="ATPase_F1/V1/A1_a/bsu_N_sf"/>
</dbReference>
<dbReference type="InterPro" id="IPR000194">
    <property type="entry name" value="ATPase_F1/V1/A1_a/bsu_nucl-bd"/>
</dbReference>
<dbReference type="InterPro" id="IPR024034">
    <property type="entry name" value="ATPase_F1/V1_b/a_C"/>
</dbReference>
<dbReference type="InterPro" id="IPR027417">
    <property type="entry name" value="P-loop_NTPase"/>
</dbReference>
<dbReference type="NCBIfam" id="TIGR01039">
    <property type="entry name" value="atpD"/>
    <property type="match status" value="1"/>
</dbReference>
<dbReference type="PANTHER" id="PTHR15184">
    <property type="entry name" value="ATP SYNTHASE"/>
    <property type="match status" value="1"/>
</dbReference>
<dbReference type="PANTHER" id="PTHR15184:SF71">
    <property type="entry name" value="ATP SYNTHASE SUBUNIT BETA, MITOCHONDRIAL"/>
    <property type="match status" value="1"/>
</dbReference>
<dbReference type="Pfam" id="PF00006">
    <property type="entry name" value="ATP-synt_ab"/>
    <property type="match status" value="1"/>
</dbReference>
<dbReference type="Pfam" id="PF02874">
    <property type="entry name" value="ATP-synt_ab_N"/>
    <property type="match status" value="1"/>
</dbReference>
<dbReference type="Pfam" id="PF22919">
    <property type="entry name" value="ATP-synt_VA_C"/>
    <property type="match status" value="1"/>
</dbReference>
<dbReference type="PIRSF" id="PIRSF039072">
    <property type="entry name" value="ATPase_subunit_beta"/>
    <property type="match status" value="1"/>
</dbReference>
<dbReference type="SMART" id="SM00382">
    <property type="entry name" value="AAA"/>
    <property type="match status" value="1"/>
</dbReference>
<dbReference type="SUPFAM" id="SSF47917">
    <property type="entry name" value="C-terminal domain of alpha and beta subunits of F1 ATP synthase"/>
    <property type="match status" value="1"/>
</dbReference>
<dbReference type="SUPFAM" id="SSF50615">
    <property type="entry name" value="N-terminal domain of alpha and beta subunits of F1 ATP synthase"/>
    <property type="match status" value="1"/>
</dbReference>
<dbReference type="SUPFAM" id="SSF52540">
    <property type="entry name" value="P-loop containing nucleoside triphosphate hydrolases"/>
    <property type="match status" value="1"/>
</dbReference>
<dbReference type="PROSITE" id="PS00152">
    <property type="entry name" value="ATPASE_ALPHA_BETA"/>
    <property type="match status" value="1"/>
</dbReference>
<feature type="transit peptide" description="Mitochondrion" evidence="1">
    <location>
        <begin position="1"/>
        <end status="unknown"/>
    </location>
</feature>
<feature type="chain" id="PRO_0000002451" description="ATP synthase subunit beta, mitochondrial">
    <location>
        <begin status="unknown"/>
        <end position="505"/>
    </location>
</feature>
<feature type="binding site" evidence="1">
    <location>
        <begin position="184"/>
        <end position="191"/>
    </location>
    <ligand>
        <name>ATP</name>
        <dbReference type="ChEBI" id="CHEBI:30616"/>
    </ligand>
</feature>